<feature type="chain" id="PRO_1000211888" description="Nitrogenase iron protein">
    <location>
        <begin position="1"/>
        <end position="273"/>
    </location>
</feature>
<feature type="binding site" evidence="1">
    <location>
        <begin position="8"/>
        <end position="15"/>
    </location>
    <ligand>
        <name>ATP</name>
        <dbReference type="ChEBI" id="CHEBI:30616"/>
    </ligand>
</feature>
<feature type="binding site" evidence="1">
    <location>
        <position position="95"/>
    </location>
    <ligand>
        <name>[4Fe-4S] cluster</name>
        <dbReference type="ChEBI" id="CHEBI:49883"/>
        <note>ligand shared between dimeric partners</note>
    </ligand>
</feature>
<feature type="binding site" evidence="1">
    <location>
        <position position="130"/>
    </location>
    <ligand>
        <name>[4Fe-4S] cluster</name>
        <dbReference type="ChEBI" id="CHEBI:49883"/>
        <note>ligand shared between dimeric partners</note>
    </ligand>
</feature>
<feature type="modified residue" description="ADP-ribosylarginine; by dinitrogenase reductase ADP-ribosyltransferase" evidence="1">
    <location>
        <position position="98"/>
    </location>
</feature>
<keyword id="KW-0004">4Fe-4S</keyword>
<keyword id="KW-0013">ADP-ribosylation</keyword>
<keyword id="KW-0067">ATP-binding</keyword>
<keyword id="KW-0408">Iron</keyword>
<keyword id="KW-0411">Iron-sulfur</keyword>
<keyword id="KW-0479">Metal-binding</keyword>
<keyword id="KW-0535">Nitrogen fixation</keyword>
<keyword id="KW-0547">Nucleotide-binding</keyword>
<keyword id="KW-0560">Oxidoreductase</keyword>
<name>NIFH_ROSS1</name>
<comment type="function">
    <text evidence="1">The key enzymatic reactions in nitrogen fixation are catalyzed by the nitrogenase complex, which has 2 components: the iron protein and the molybdenum-iron protein.</text>
</comment>
<comment type="catalytic activity">
    <reaction evidence="1">
        <text>N2 + 8 reduced [2Fe-2S]-[ferredoxin] + 16 ATP + 16 H2O = H2 + 8 oxidized [2Fe-2S]-[ferredoxin] + 2 NH4(+) + 16 ADP + 16 phosphate + 6 H(+)</text>
        <dbReference type="Rhea" id="RHEA:21448"/>
        <dbReference type="Rhea" id="RHEA-COMP:10000"/>
        <dbReference type="Rhea" id="RHEA-COMP:10001"/>
        <dbReference type="ChEBI" id="CHEBI:15377"/>
        <dbReference type="ChEBI" id="CHEBI:15378"/>
        <dbReference type="ChEBI" id="CHEBI:17997"/>
        <dbReference type="ChEBI" id="CHEBI:18276"/>
        <dbReference type="ChEBI" id="CHEBI:28938"/>
        <dbReference type="ChEBI" id="CHEBI:30616"/>
        <dbReference type="ChEBI" id="CHEBI:33737"/>
        <dbReference type="ChEBI" id="CHEBI:33738"/>
        <dbReference type="ChEBI" id="CHEBI:43474"/>
        <dbReference type="ChEBI" id="CHEBI:456216"/>
        <dbReference type="EC" id="1.18.6.1"/>
    </reaction>
</comment>
<comment type="cofactor">
    <cofactor evidence="1">
        <name>[4Fe-4S] cluster</name>
        <dbReference type="ChEBI" id="CHEBI:49883"/>
    </cofactor>
    <text evidence="1">Binds 1 [4Fe-4S] cluster per dimer.</text>
</comment>
<comment type="subunit">
    <text evidence="1">Homodimer.</text>
</comment>
<comment type="PTM">
    <text evidence="1">The reversible ADP-ribosylation of Arg-98 inactivates the nitrogenase reductase and regulates nitrogenase activity.</text>
</comment>
<comment type="similarity">
    <text evidence="1">Belongs to the NifH/BchL/ChlL family.</text>
</comment>
<evidence type="ECO:0000255" key="1">
    <source>
        <dbReference type="HAMAP-Rule" id="MF_00533"/>
    </source>
</evidence>
<accession>A5USK5</accession>
<sequence>MRQVAFYGKGGIGKSTTQQNTAAALASMGYRLMVVGCDPKADCTRLLLRGVRQPSVLDTLRDVGPESVQLEKVVVQGYGGVKCVESGGPEPGVGCGGRGVITAIQTLETLGAYKDDLDYVFYDVLGDVVCGGFAMPIREGYAEEIYIVCSGEYMALFAANNICKGIKKFAERGYARLGGLICNSRLVENERALVEEFARRLNTKMIHFVPRSKDVQRAEINKKTVIDYDPELPQAHEYRELARKIDENDEFTIPTPITQDELEDLMREYGIVD</sequence>
<dbReference type="EC" id="1.18.6.1" evidence="1"/>
<dbReference type="EMBL" id="CP000686">
    <property type="protein sequence ID" value="ABQ89608.1"/>
    <property type="molecule type" value="Genomic_DNA"/>
</dbReference>
<dbReference type="RefSeq" id="WP_011955961.1">
    <property type="nucleotide sequence ID" value="NC_009523.1"/>
</dbReference>
<dbReference type="SMR" id="A5USK5"/>
<dbReference type="STRING" id="357808.RoseRS_1201"/>
<dbReference type="KEGG" id="rrs:RoseRS_1201"/>
<dbReference type="eggNOG" id="COG1348">
    <property type="taxonomic scope" value="Bacteria"/>
</dbReference>
<dbReference type="HOGENOM" id="CLU_059373_0_0_0"/>
<dbReference type="OrthoDB" id="9778641at2"/>
<dbReference type="Proteomes" id="UP000006554">
    <property type="component" value="Chromosome"/>
</dbReference>
<dbReference type="GO" id="GO:0051539">
    <property type="term" value="F:4 iron, 4 sulfur cluster binding"/>
    <property type="evidence" value="ECO:0007669"/>
    <property type="project" value="UniProtKB-KW"/>
</dbReference>
<dbReference type="GO" id="GO:0005524">
    <property type="term" value="F:ATP binding"/>
    <property type="evidence" value="ECO:0007669"/>
    <property type="project" value="UniProtKB-UniRule"/>
</dbReference>
<dbReference type="GO" id="GO:0046872">
    <property type="term" value="F:metal ion binding"/>
    <property type="evidence" value="ECO:0007669"/>
    <property type="project" value="UniProtKB-KW"/>
</dbReference>
<dbReference type="GO" id="GO:0016163">
    <property type="term" value="F:nitrogenase activity"/>
    <property type="evidence" value="ECO:0007669"/>
    <property type="project" value="UniProtKB-UniRule"/>
</dbReference>
<dbReference type="GO" id="GO:0009399">
    <property type="term" value="P:nitrogen fixation"/>
    <property type="evidence" value="ECO:0007669"/>
    <property type="project" value="UniProtKB-UniRule"/>
</dbReference>
<dbReference type="CDD" id="cd02040">
    <property type="entry name" value="NifH"/>
    <property type="match status" value="1"/>
</dbReference>
<dbReference type="Gene3D" id="3.40.50.300">
    <property type="entry name" value="P-loop containing nucleotide triphosphate hydrolases"/>
    <property type="match status" value="1"/>
</dbReference>
<dbReference type="HAMAP" id="MF_00533">
    <property type="entry name" value="NifH"/>
    <property type="match status" value="1"/>
</dbReference>
<dbReference type="InterPro" id="IPR030655">
    <property type="entry name" value="NifH/chlL_CS"/>
</dbReference>
<dbReference type="InterPro" id="IPR000392">
    <property type="entry name" value="NifH/frxC"/>
</dbReference>
<dbReference type="InterPro" id="IPR005977">
    <property type="entry name" value="Nitrogenase_Fe_NifH"/>
</dbReference>
<dbReference type="InterPro" id="IPR027417">
    <property type="entry name" value="P-loop_NTPase"/>
</dbReference>
<dbReference type="NCBIfam" id="TIGR01287">
    <property type="entry name" value="nifH"/>
    <property type="match status" value="1"/>
</dbReference>
<dbReference type="PANTHER" id="PTHR42864">
    <property type="entry name" value="LIGHT-INDEPENDENT PROTOCHLOROPHYLLIDE REDUCTASE IRON-SULFUR ATP-BINDING PROTEIN"/>
    <property type="match status" value="1"/>
</dbReference>
<dbReference type="PANTHER" id="PTHR42864:SF2">
    <property type="entry name" value="LIGHT-INDEPENDENT PROTOCHLOROPHYLLIDE REDUCTASE IRON-SULFUR ATP-BINDING PROTEIN"/>
    <property type="match status" value="1"/>
</dbReference>
<dbReference type="Pfam" id="PF00142">
    <property type="entry name" value="Fer4_NifH"/>
    <property type="match status" value="1"/>
</dbReference>
<dbReference type="PIRSF" id="PIRSF000363">
    <property type="entry name" value="Nitrogenase_iron"/>
    <property type="match status" value="1"/>
</dbReference>
<dbReference type="PRINTS" id="PR00091">
    <property type="entry name" value="NITROGNASEII"/>
</dbReference>
<dbReference type="SUPFAM" id="SSF52540">
    <property type="entry name" value="P-loop containing nucleoside triphosphate hydrolases"/>
    <property type="match status" value="1"/>
</dbReference>
<dbReference type="PROSITE" id="PS00746">
    <property type="entry name" value="NIFH_FRXC_1"/>
    <property type="match status" value="1"/>
</dbReference>
<dbReference type="PROSITE" id="PS00692">
    <property type="entry name" value="NIFH_FRXC_2"/>
    <property type="match status" value="1"/>
</dbReference>
<dbReference type="PROSITE" id="PS51026">
    <property type="entry name" value="NIFH_FRXC_3"/>
    <property type="match status" value="1"/>
</dbReference>
<organism>
    <name type="scientific">Roseiflexus sp. (strain RS-1)</name>
    <dbReference type="NCBI Taxonomy" id="357808"/>
    <lineage>
        <taxon>Bacteria</taxon>
        <taxon>Bacillati</taxon>
        <taxon>Chloroflexota</taxon>
        <taxon>Chloroflexia</taxon>
        <taxon>Chloroflexales</taxon>
        <taxon>Roseiflexineae</taxon>
        <taxon>Roseiflexaceae</taxon>
        <taxon>Roseiflexus</taxon>
    </lineage>
</organism>
<reference key="1">
    <citation type="submission" date="2007-04" db="EMBL/GenBank/DDBJ databases">
        <title>Complete sequence of Roseiflexus sp. RS-1.</title>
        <authorList>
            <consortium name="US DOE Joint Genome Institute"/>
            <person name="Copeland A."/>
            <person name="Lucas S."/>
            <person name="Lapidus A."/>
            <person name="Barry K."/>
            <person name="Detter J.C."/>
            <person name="Glavina del Rio T."/>
            <person name="Hammon N."/>
            <person name="Israni S."/>
            <person name="Dalin E."/>
            <person name="Tice H."/>
            <person name="Pitluck S."/>
            <person name="Chertkov O."/>
            <person name="Brettin T."/>
            <person name="Bruce D."/>
            <person name="Han C."/>
            <person name="Schmutz J."/>
            <person name="Larimer F."/>
            <person name="Land M."/>
            <person name="Hauser L."/>
            <person name="Kyrpides N."/>
            <person name="Mikhailova N."/>
            <person name="Bryant D.A."/>
            <person name="Richardson P."/>
        </authorList>
    </citation>
    <scope>NUCLEOTIDE SEQUENCE [LARGE SCALE GENOMIC DNA]</scope>
    <source>
        <strain>RS-1</strain>
    </source>
</reference>
<gene>
    <name evidence="1" type="primary">nifH</name>
    <name type="ordered locus">RoseRS_1201</name>
</gene>
<protein>
    <recommendedName>
        <fullName evidence="1">Nitrogenase iron protein</fullName>
        <ecNumber evidence="1">1.18.6.1</ecNumber>
    </recommendedName>
    <alternativeName>
        <fullName evidence="1">Nitrogenase Fe protein</fullName>
    </alternativeName>
    <alternativeName>
        <fullName evidence="1">Nitrogenase component II</fullName>
    </alternativeName>
    <alternativeName>
        <fullName evidence="1">Nitrogenase reductase</fullName>
    </alternativeName>
</protein>
<proteinExistence type="inferred from homology"/>